<organism>
    <name type="scientific">Rickettsia rickettsii (strain Iowa)</name>
    <dbReference type="NCBI Taxonomy" id="452659"/>
    <lineage>
        <taxon>Bacteria</taxon>
        <taxon>Pseudomonadati</taxon>
        <taxon>Pseudomonadota</taxon>
        <taxon>Alphaproteobacteria</taxon>
        <taxon>Rickettsiales</taxon>
        <taxon>Rickettsiaceae</taxon>
        <taxon>Rickettsieae</taxon>
        <taxon>Rickettsia</taxon>
        <taxon>spotted fever group</taxon>
    </lineage>
</organism>
<dbReference type="EMBL" id="CP000766">
    <property type="protein sequence ID" value="ABY72789.1"/>
    <property type="molecule type" value="Genomic_DNA"/>
</dbReference>
<dbReference type="RefSeq" id="WP_012150994.1">
    <property type="nucleotide sequence ID" value="NC_010263.3"/>
</dbReference>
<dbReference type="SMR" id="B0BY63"/>
<dbReference type="GeneID" id="79937527"/>
<dbReference type="KEGG" id="rrj:RrIowa_0969"/>
<dbReference type="eggNOG" id="COG0779">
    <property type="taxonomic scope" value="Bacteria"/>
</dbReference>
<dbReference type="HOGENOM" id="CLU_070525_0_2_5"/>
<dbReference type="Proteomes" id="UP000000796">
    <property type="component" value="Chromosome"/>
</dbReference>
<dbReference type="GO" id="GO:0005829">
    <property type="term" value="C:cytosol"/>
    <property type="evidence" value="ECO:0007669"/>
    <property type="project" value="TreeGrafter"/>
</dbReference>
<dbReference type="GO" id="GO:0000028">
    <property type="term" value="P:ribosomal small subunit assembly"/>
    <property type="evidence" value="ECO:0007669"/>
    <property type="project" value="TreeGrafter"/>
</dbReference>
<dbReference type="GO" id="GO:0006412">
    <property type="term" value="P:translation"/>
    <property type="evidence" value="ECO:0007669"/>
    <property type="project" value="TreeGrafter"/>
</dbReference>
<dbReference type="CDD" id="cd01734">
    <property type="entry name" value="YlxS_C"/>
    <property type="match status" value="1"/>
</dbReference>
<dbReference type="Gene3D" id="2.30.30.180">
    <property type="entry name" value="Ribosome maturation factor RimP, C-terminal domain"/>
    <property type="match status" value="1"/>
</dbReference>
<dbReference type="Gene3D" id="3.30.300.70">
    <property type="entry name" value="RimP-like superfamily, N-terminal"/>
    <property type="match status" value="1"/>
</dbReference>
<dbReference type="HAMAP" id="MF_01077">
    <property type="entry name" value="RimP"/>
    <property type="match status" value="1"/>
</dbReference>
<dbReference type="InterPro" id="IPR003728">
    <property type="entry name" value="Ribosome_maturation_RimP"/>
</dbReference>
<dbReference type="InterPro" id="IPR028998">
    <property type="entry name" value="RimP_C"/>
</dbReference>
<dbReference type="InterPro" id="IPR036847">
    <property type="entry name" value="RimP_C_sf"/>
</dbReference>
<dbReference type="InterPro" id="IPR028989">
    <property type="entry name" value="RimP_N"/>
</dbReference>
<dbReference type="InterPro" id="IPR035956">
    <property type="entry name" value="RimP_N_sf"/>
</dbReference>
<dbReference type="NCBIfam" id="NF000937">
    <property type="entry name" value="PRK00092.4-3"/>
    <property type="match status" value="1"/>
</dbReference>
<dbReference type="PANTHER" id="PTHR33867">
    <property type="entry name" value="RIBOSOME MATURATION FACTOR RIMP"/>
    <property type="match status" value="1"/>
</dbReference>
<dbReference type="PANTHER" id="PTHR33867:SF1">
    <property type="entry name" value="RIBOSOME MATURATION FACTOR RIMP"/>
    <property type="match status" value="1"/>
</dbReference>
<dbReference type="Pfam" id="PF17384">
    <property type="entry name" value="DUF150_C"/>
    <property type="match status" value="1"/>
</dbReference>
<dbReference type="Pfam" id="PF02576">
    <property type="entry name" value="RimP_N"/>
    <property type="match status" value="1"/>
</dbReference>
<dbReference type="SUPFAM" id="SSF74942">
    <property type="entry name" value="YhbC-like, C-terminal domain"/>
    <property type="match status" value="1"/>
</dbReference>
<dbReference type="SUPFAM" id="SSF75420">
    <property type="entry name" value="YhbC-like, N-terminal domain"/>
    <property type="match status" value="1"/>
</dbReference>
<reference key="1">
    <citation type="journal article" date="2008" name="Infect. Immun.">
        <title>Genomic comparison of virulent Rickettsia rickettsii Sheila Smith and avirulent Rickettsia rickettsii Iowa.</title>
        <authorList>
            <person name="Ellison D.W."/>
            <person name="Clark T.R."/>
            <person name="Sturdevant D.E."/>
            <person name="Virtaneva K."/>
            <person name="Porcella S.F."/>
            <person name="Hackstadt T."/>
        </authorList>
    </citation>
    <scope>NUCLEOTIDE SEQUENCE [LARGE SCALE GENOMIC DNA]</scope>
    <source>
        <strain>Iowa</strain>
    </source>
</reference>
<accession>B0BY63</accession>
<sequence length="161" mass="18469">MQTIEQQITNVIEESLTDMGFELVLVKFKGVNPKVVEILIDSLNSEKVSVEDCTKASRTISAILDVEDLIEAAYSLEVASSGLERPLVKFENYNRFLEREVKIKLKELLNGKTRYQGKIIKAENNKIYLKCEEQEVLIDYDLIKNANLVLTEEVFKKLLKQ</sequence>
<gene>
    <name evidence="1" type="primary">rimP</name>
    <name type="ordered locus">RrIowa_0969</name>
</gene>
<comment type="function">
    <text evidence="1">Required for maturation of 30S ribosomal subunits.</text>
</comment>
<comment type="subcellular location">
    <subcellularLocation>
        <location evidence="1">Cytoplasm</location>
    </subcellularLocation>
</comment>
<comment type="similarity">
    <text evidence="1">Belongs to the RimP family.</text>
</comment>
<feature type="chain" id="PRO_1000084532" description="Ribosome maturation factor RimP">
    <location>
        <begin position="1"/>
        <end position="161"/>
    </location>
</feature>
<protein>
    <recommendedName>
        <fullName evidence="1">Ribosome maturation factor RimP</fullName>
    </recommendedName>
</protein>
<keyword id="KW-0963">Cytoplasm</keyword>
<keyword id="KW-0690">Ribosome biogenesis</keyword>
<evidence type="ECO:0000255" key="1">
    <source>
        <dbReference type="HAMAP-Rule" id="MF_01077"/>
    </source>
</evidence>
<proteinExistence type="inferred from homology"/>
<name>RIMP_RICRO</name>